<organism>
    <name type="scientific">Homo sapiens</name>
    <name type="common">Human</name>
    <dbReference type="NCBI Taxonomy" id="9606"/>
    <lineage>
        <taxon>Eukaryota</taxon>
        <taxon>Metazoa</taxon>
        <taxon>Chordata</taxon>
        <taxon>Craniata</taxon>
        <taxon>Vertebrata</taxon>
        <taxon>Euteleostomi</taxon>
        <taxon>Mammalia</taxon>
        <taxon>Eutheria</taxon>
        <taxon>Euarchontoglires</taxon>
        <taxon>Primates</taxon>
        <taxon>Haplorrhini</taxon>
        <taxon>Catarrhini</taxon>
        <taxon>Hominidae</taxon>
        <taxon>Homo</taxon>
    </lineage>
</organism>
<accession>Q99487</accession>
<accession>D3DPK1</accession>
<accession>O15458</accession>
<accession>Q5SY02</accession>
<comment type="function">
    <text evidence="1 2 5">Catalyzes the hydrolyze of the acetyl group at the sn-2 position of platelet-activating factor (PAF) and its analogs, leading to their inactivation (PubMed:9494101). Hydrolyzes propionyl and butyroyl moieties approximately half as effectively as PAF (By similarity). Also catalyzes transacetylation of the acetyl group from platelet-activating factor (PAF) to lysoplasmalogen and to sphingosine, producing plasmalogen analogs of PAF and N-acetylsphingosine (C2-ceramide) respectively. Has a marked selectivity for phospholipids with short acyl chains at the sn-2 position (By similarity).</text>
</comment>
<comment type="catalytic activity">
    <reaction evidence="5">
        <text>a 1-O-alkyl-2-acetyl-sn-glycero-3-phosphocholine + H2O = a 1-O-alkyl-sn-glycero-3-phosphocholine + acetate + H(+)</text>
        <dbReference type="Rhea" id="RHEA:17777"/>
        <dbReference type="ChEBI" id="CHEBI:15377"/>
        <dbReference type="ChEBI" id="CHEBI:15378"/>
        <dbReference type="ChEBI" id="CHEBI:30089"/>
        <dbReference type="ChEBI" id="CHEBI:30909"/>
        <dbReference type="ChEBI" id="CHEBI:36707"/>
        <dbReference type="EC" id="3.1.1.47"/>
    </reaction>
    <physiologicalReaction direction="left-to-right" evidence="5">
        <dbReference type="Rhea" id="RHEA:17778"/>
    </physiologicalReaction>
</comment>
<comment type="catalytic activity">
    <reaction evidence="1">
        <text>a 1-O-alkyl-2-acyl-sn-glycero-3-phosphocholine + H2O = a 1-O-alkyl-sn-glycero-3-phosphocholine + a fatty acid + H(+)</text>
        <dbReference type="Rhea" id="RHEA:36231"/>
        <dbReference type="ChEBI" id="CHEBI:15377"/>
        <dbReference type="ChEBI" id="CHEBI:15378"/>
        <dbReference type="ChEBI" id="CHEBI:28868"/>
        <dbReference type="ChEBI" id="CHEBI:30909"/>
        <dbReference type="ChEBI" id="CHEBI:36702"/>
    </reaction>
    <physiologicalReaction direction="left-to-right" evidence="1">
        <dbReference type="Rhea" id="RHEA:36232"/>
    </physiologicalReaction>
</comment>
<comment type="catalytic activity">
    <reaction evidence="2">
        <text>1-O-hexadecyl-2-acetyl-sn-glycero-3-phosphocholine + H2O = 1-O-hexadecyl-sn-glycero-3-phosphocholine + acetate + H(+)</text>
        <dbReference type="Rhea" id="RHEA:40479"/>
        <dbReference type="ChEBI" id="CHEBI:15377"/>
        <dbReference type="ChEBI" id="CHEBI:15378"/>
        <dbReference type="ChEBI" id="CHEBI:30089"/>
        <dbReference type="ChEBI" id="CHEBI:44811"/>
        <dbReference type="ChEBI" id="CHEBI:64496"/>
    </reaction>
    <physiologicalReaction direction="left-to-right" evidence="2">
        <dbReference type="Rhea" id="RHEA:40480"/>
    </physiologicalReaction>
</comment>
<comment type="catalytic activity">
    <reaction evidence="2">
        <text>1-O-hexadecyl-2-acetyl-sn-glycero-3-phosphocholine + a 1-O-(1Z-alkenyl)-sn-glycero-3-phosphoethanolamine = 1-O-(1Z-alkenyl)-2-acetyl-sn-glycero-3-phosphoethanolamine + 1-O-hexadecyl-sn-glycero-3-phosphocholine</text>
        <dbReference type="Rhea" id="RHEA:41396"/>
        <dbReference type="ChEBI" id="CHEBI:44811"/>
        <dbReference type="ChEBI" id="CHEBI:64496"/>
        <dbReference type="ChEBI" id="CHEBI:77288"/>
        <dbReference type="ChEBI" id="CHEBI:78419"/>
    </reaction>
    <physiologicalReaction direction="left-to-right" evidence="2">
        <dbReference type="Rhea" id="RHEA:41397"/>
    </physiologicalReaction>
</comment>
<comment type="catalytic activity">
    <reaction evidence="2">
        <text>1-O-hexadecyl-2-acetyl-sn-glycero-3-phosphocholine + sphing-4-enine = 1-O-hexadecyl-sn-glycero-3-phosphocholine + N-(acetyl)-sphing-4-enine + H(+)</text>
        <dbReference type="Rhea" id="RHEA:41408"/>
        <dbReference type="ChEBI" id="CHEBI:15378"/>
        <dbReference type="ChEBI" id="CHEBI:44811"/>
        <dbReference type="ChEBI" id="CHEBI:46979"/>
        <dbReference type="ChEBI" id="CHEBI:57756"/>
        <dbReference type="ChEBI" id="CHEBI:64496"/>
    </reaction>
    <physiologicalReaction direction="left-to-right" evidence="2">
        <dbReference type="Rhea" id="RHEA:41409"/>
    </physiologicalReaction>
</comment>
<comment type="catalytic activity">
    <reaction evidence="2">
        <text>a 1-organyl-2-lyso-sn-glycero-3-phospholipid + a 1-O-alkyl-2-acetyl-sn-glycero-3-phosphocholine = a 1-organyl-2-acetyl-sn-glycero-3-phospholipid + a 1-O-alkyl-sn-glycero-3-phosphocholine</text>
        <dbReference type="Rhea" id="RHEA:11048"/>
        <dbReference type="ChEBI" id="CHEBI:685"/>
        <dbReference type="ChEBI" id="CHEBI:30909"/>
        <dbReference type="ChEBI" id="CHEBI:36707"/>
        <dbReference type="ChEBI" id="CHEBI:76590"/>
        <dbReference type="EC" id="2.3.1.149"/>
    </reaction>
    <physiologicalReaction direction="left-to-right" evidence="2">
        <dbReference type="Rhea" id="RHEA:11049"/>
    </physiologicalReaction>
</comment>
<comment type="catalytic activity">
    <reaction evidence="1">
        <text>1-O-hexadecyl-2-glutaryl-sn-glycero-3-phosphocholine + H2O = 1-O-hexadecyl-sn-glycero-3-phosphocholine + glutarate + H(+)</text>
        <dbReference type="Rhea" id="RHEA:41700"/>
        <dbReference type="ChEBI" id="CHEBI:15377"/>
        <dbReference type="ChEBI" id="CHEBI:15378"/>
        <dbReference type="ChEBI" id="CHEBI:30921"/>
        <dbReference type="ChEBI" id="CHEBI:64496"/>
        <dbReference type="ChEBI" id="CHEBI:78371"/>
    </reaction>
    <physiologicalReaction direction="left-to-right" evidence="1">
        <dbReference type="Rhea" id="RHEA:41701"/>
    </physiologicalReaction>
</comment>
<comment type="catalytic activity">
    <reaction evidence="1">
        <text>1-O-hexadecyl-2-succinyl-sn-glycero-3-phosphocholine + H2O = 1-O-hexadecyl-sn-glycero-3-phosphocholine + succinate + H(+)</text>
        <dbReference type="Rhea" id="RHEA:41696"/>
        <dbReference type="ChEBI" id="CHEBI:15377"/>
        <dbReference type="ChEBI" id="CHEBI:15378"/>
        <dbReference type="ChEBI" id="CHEBI:30031"/>
        <dbReference type="ChEBI" id="CHEBI:64496"/>
        <dbReference type="ChEBI" id="CHEBI:78369"/>
    </reaction>
    <physiologicalReaction direction="left-to-right" evidence="1">
        <dbReference type="Rhea" id="RHEA:41697"/>
    </physiologicalReaction>
</comment>
<comment type="catalytic activity">
    <reaction evidence="1">
        <text>1-O-hexadecyl-2-butanoyl-sn-glycero-3-phosphocholine + H2O = 1-O-hexadecyl-sn-glycero-3-phosphocholine + butanoate + H(+)</text>
        <dbReference type="Rhea" id="RHEA:41692"/>
        <dbReference type="ChEBI" id="CHEBI:15377"/>
        <dbReference type="ChEBI" id="CHEBI:15378"/>
        <dbReference type="ChEBI" id="CHEBI:17968"/>
        <dbReference type="ChEBI" id="CHEBI:64496"/>
        <dbReference type="ChEBI" id="CHEBI:78368"/>
    </reaction>
    <physiologicalReaction direction="left-to-right" evidence="1">
        <dbReference type="Rhea" id="RHEA:41693"/>
    </physiologicalReaction>
</comment>
<comment type="catalytic activity">
    <reaction evidence="1">
        <text>1-O-hexadecyl-2-propanoyl-sn-glycero-3-phosphocholine + H2O = 1-O-hexadecyl-sn-glycero-3-phosphocholine + propanoate + H(+)</text>
        <dbReference type="Rhea" id="RHEA:41688"/>
        <dbReference type="ChEBI" id="CHEBI:15377"/>
        <dbReference type="ChEBI" id="CHEBI:15378"/>
        <dbReference type="ChEBI" id="CHEBI:17272"/>
        <dbReference type="ChEBI" id="CHEBI:64496"/>
        <dbReference type="ChEBI" id="CHEBI:78367"/>
    </reaction>
    <physiologicalReaction direction="left-to-right" evidence="1">
        <dbReference type="Rhea" id="RHEA:41689"/>
    </physiologicalReaction>
</comment>
<comment type="activity regulation">
    <text evidence="5">Inhibited by phenylmethanesulfonyl fluoride, 3,4,dichloroisocoumarin, diisopropyl fluorophosphate (DFP) and diethyl p-nitrophenyl phosphate (DENP).</text>
</comment>
<comment type="biophysicochemical properties">
    <kinetics>
        <KM evidence="5">42 uM for 2-O-acetyl-1-O-hexadecyl-sn-glycero-3-phosphocholine (PAF)</KM>
        <KM evidence="5">10 uM for 1-decanoyl-2-(4-nitrophenylglutaryl) phosphate (DNGP)</KM>
        <Vmax evidence="5">35.0 umol/min/mg enzyme with 2-O-acetyl-1-O-hexadecyl-sn-glycero-3-phosphocholine (PAF) as substrate</Vmax>
        <Vmax evidence="5">1.7 umol/min/mg enzyme with 1-decanoyl-2-(4-nitrophenylglutaryl) phosphate (DNGP) as substrate</Vmax>
    </kinetics>
</comment>
<comment type="subunit">
    <text evidence="9">Monomer.</text>
</comment>
<comment type="subcellular location">
    <subcellularLocation>
        <location evidence="5">Cytoplasm</location>
    </subcellularLocation>
    <subcellularLocation>
        <location evidence="1">Membrane</location>
        <topology evidence="1">Lipid-anchor</topology>
    </subcellularLocation>
    <subcellularLocation>
        <location evidence="1">Endoplasmic reticulum membrane</location>
        <topology evidence="1">Lipid-anchor</topology>
    </subcellularLocation>
    <text evidence="1">In resting cells, localizes to intracellular membranes and cytoplasm. Translocates from the cytoplasm to intracellular membranes upon oxidative stress.</text>
</comment>
<comment type="tissue specificity">
    <text evidence="4 5">Broadly expressed in different tissues, but high in B- and T-lymphocytes. In brain, expression is restricted to amygdala and frontal cortex.</text>
</comment>
<comment type="similarity">
    <text evidence="8">Belongs to the serine esterase family.</text>
</comment>
<evidence type="ECO:0000250" key="1">
    <source>
        <dbReference type="UniProtKB" id="P79106"/>
    </source>
</evidence>
<evidence type="ECO:0000250" key="2">
    <source>
        <dbReference type="UniProtKB" id="P83006"/>
    </source>
</evidence>
<evidence type="ECO:0000255" key="3">
    <source>
        <dbReference type="PROSITE-ProRule" id="PRU10037"/>
    </source>
</evidence>
<evidence type="ECO:0000269" key="4">
    <source>
    </source>
</evidence>
<evidence type="ECO:0000269" key="5">
    <source>
    </source>
</evidence>
<evidence type="ECO:0000303" key="6">
    <source>
    </source>
</evidence>
<evidence type="ECO:0000303" key="7">
    <source>
    </source>
</evidence>
<evidence type="ECO:0000305" key="8"/>
<evidence type="ECO:0000305" key="9">
    <source>
    </source>
</evidence>
<evidence type="ECO:0000312" key="10">
    <source>
        <dbReference type="HGNC" id="HGNC:8579"/>
    </source>
</evidence>
<dbReference type="EC" id="3.1.1.47" evidence="5"/>
<dbReference type="EC" id="2.3.1.149" evidence="2"/>
<dbReference type="EMBL" id="D87845">
    <property type="protein sequence ID" value="BAA13468.1"/>
    <property type="molecule type" value="mRNA"/>
</dbReference>
<dbReference type="EMBL" id="U89386">
    <property type="protein sequence ID" value="AAC39707.1"/>
    <property type="molecule type" value="mRNA"/>
</dbReference>
<dbReference type="EMBL" id="AL592064">
    <property type="status" value="NOT_ANNOTATED_CDS"/>
    <property type="molecule type" value="Genomic_DNA"/>
</dbReference>
<dbReference type="EMBL" id="CH471059">
    <property type="protein sequence ID" value="EAX07852.1"/>
    <property type="molecule type" value="Genomic_DNA"/>
</dbReference>
<dbReference type="EMBL" id="CH471059">
    <property type="protein sequence ID" value="EAX07853.1"/>
    <property type="molecule type" value="Genomic_DNA"/>
</dbReference>
<dbReference type="EMBL" id="BC001158">
    <property type="protein sequence ID" value="AAH01158.1"/>
    <property type="molecule type" value="mRNA"/>
</dbReference>
<dbReference type="CCDS" id="CCDS270.1"/>
<dbReference type="RefSeq" id="NP_000428.2">
    <property type="nucleotide sequence ID" value="NM_000437.3"/>
</dbReference>
<dbReference type="RefSeq" id="XP_006710733.1">
    <property type="nucleotide sequence ID" value="XM_006710670.4"/>
</dbReference>
<dbReference type="RefSeq" id="XP_054192805.1">
    <property type="nucleotide sequence ID" value="XM_054336830.1"/>
</dbReference>
<dbReference type="SMR" id="Q99487"/>
<dbReference type="BioGRID" id="111088">
    <property type="interactions" value="16"/>
</dbReference>
<dbReference type="FunCoup" id="Q99487">
    <property type="interactions" value="436"/>
</dbReference>
<dbReference type="IntAct" id="Q99487">
    <property type="interactions" value="6"/>
</dbReference>
<dbReference type="STRING" id="9606.ENSP00000363400"/>
<dbReference type="ESTHER" id="human-PAFAH2">
    <property type="family name" value="PAF-Acetylhydrolase"/>
</dbReference>
<dbReference type="iPTMnet" id="Q99487"/>
<dbReference type="PhosphoSitePlus" id="Q99487"/>
<dbReference type="SwissPalm" id="Q99487"/>
<dbReference type="BioMuta" id="PAFAH2"/>
<dbReference type="DMDM" id="6647691"/>
<dbReference type="jPOST" id="Q99487"/>
<dbReference type="MassIVE" id="Q99487"/>
<dbReference type="PaxDb" id="9606-ENSP00000363400"/>
<dbReference type="PeptideAtlas" id="Q99487"/>
<dbReference type="ProteomicsDB" id="78290"/>
<dbReference type="Pumba" id="Q99487"/>
<dbReference type="Antibodypedia" id="622">
    <property type="antibodies" value="138 antibodies from 23 providers"/>
</dbReference>
<dbReference type="DNASU" id="5051"/>
<dbReference type="Ensembl" id="ENST00000374282.8">
    <property type="protein sequence ID" value="ENSP00000363400.3"/>
    <property type="gene ID" value="ENSG00000158006.14"/>
</dbReference>
<dbReference type="Ensembl" id="ENST00000374284.5">
    <property type="protein sequence ID" value="ENSP00000363402.1"/>
    <property type="gene ID" value="ENSG00000158006.14"/>
</dbReference>
<dbReference type="GeneID" id="5051"/>
<dbReference type="KEGG" id="hsa:5051"/>
<dbReference type="MANE-Select" id="ENST00000374282.8">
    <property type="protein sequence ID" value="ENSP00000363400.3"/>
    <property type="RefSeq nucleotide sequence ID" value="NM_000437.4"/>
    <property type="RefSeq protein sequence ID" value="NP_000428.2"/>
</dbReference>
<dbReference type="UCSC" id="uc001bld.4">
    <property type="organism name" value="human"/>
</dbReference>
<dbReference type="AGR" id="HGNC:8579"/>
<dbReference type="CTD" id="5051"/>
<dbReference type="DisGeNET" id="5051"/>
<dbReference type="GeneCards" id="PAFAH2"/>
<dbReference type="HGNC" id="HGNC:8579">
    <property type="gene designation" value="PAFAH2"/>
</dbReference>
<dbReference type="HPA" id="ENSG00000158006">
    <property type="expression patterns" value="Tissue enhanced (lymphoid)"/>
</dbReference>
<dbReference type="MIM" id="602344">
    <property type="type" value="gene"/>
</dbReference>
<dbReference type="neXtProt" id="NX_Q99487"/>
<dbReference type="OpenTargets" id="ENSG00000158006"/>
<dbReference type="PharmGKB" id="PA32910"/>
<dbReference type="VEuPathDB" id="HostDB:ENSG00000158006"/>
<dbReference type="eggNOG" id="KOG3847">
    <property type="taxonomic scope" value="Eukaryota"/>
</dbReference>
<dbReference type="GeneTree" id="ENSGT00390000005233"/>
<dbReference type="HOGENOM" id="CLU_022501_0_0_1"/>
<dbReference type="InParanoid" id="Q99487"/>
<dbReference type="OMA" id="FDQWDNL"/>
<dbReference type="OrthoDB" id="2363873at2759"/>
<dbReference type="PAN-GO" id="Q99487">
    <property type="GO annotations" value="1 GO annotation based on evolutionary models"/>
</dbReference>
<dbReference type="PhylomeDB" id="Q99487"/>
<dbReference type="TreeFam" id="TF313831"/>
<dbReference type="BRENDA" id="3.1.1.47">
    <property type="organism ID" value="2681"/>
</dbReference>
<dbReference type="PathwayCommons" id="Q99487"/>
<dbReference type="Reactome" id="R-HSA-418346">
    <property type="pathway name" value="Platelet homeostasis"/>
</dbReference>
<dbReference type="BioGRID-ORCS" id="5051">
    <property type="hits" value="18 hits in 1159 CRISPR screens"/>
</dbReference>
<dbReference type="ChiTaRS" id="PAFAH2">
    <property type="organism name" value="human"/>
</dbReference>
<dbReference type="GeneWiki" id="PAFAH2"/>
<dbReference type="GenomeRNAi" id="5051"/>
<dbReference type="Pharos" id="Q99487">
    <property type="development level" value="Tbio"/>
</dbReference>
<dbReference type="PRO" id="PR:Q99487"/>
<dbReference type="Proteomes" id="UP000005640">
    <property type="component" value="Chromosome 1"/>
</dbReference>
<dbReference type="RNAct" id="Q99487">
    <property type="molecule type" value="protein"/>
</dbReference>
<dbReference type="Bgee" id="ENSG00000158006">
    <property type="expression patterns" value="Expressed in body of pancreas and 132 other cell types or tissues"/>
</dbReference>
<dbReference type="ExpressionAtlas" id="Q99487">
    <property type="expression patterns" value="baseline and differential"/>
</dbReference>
<dbReference type="GO" id="GO:0005737">
    <property type="term" value="C:cytoplasm"/>
    <property type="evidence" value="ECO:0000250"/>
    <property type="project" value="UniProtKB"/>
</dbReference>
<dbReference type="GO" id="GO:0005789">
    <property type="term" value="C:endoplasmic reticulum membrane"/>
    <property type="evidence" value="ECO:0000304"/>
    <property type="project" value="Reactome"/>
</dbReference>
<dbReference type="GO" id="GO:0003847">
    <property type="term" value="F:1-alkyl-2-acetylglycerophosphocholine esterase activity"/>
    <property type="evidence" value="ECO:0000250"/>
    <property type="project" value="UniProtKB"/>
</dbReference>
<dbReference type="GO" id="GO:0005543">
    <property type="term" value="F:phospholipid binding"/>
    <property type="evidence" value="ECO:0000304"/>
    <property type="project" value="ProtInc"/>
</dbReference>
<dbReference type="GO" id="GO:0047179">
    <property type="term" value="F:platelet-activating factor acetyltransferase activity"/>
    <property type="evidence" value="ECO:0000250"/>
    <property type="project" value="UniProtKB"/>
</dbReference>
<dbReference type="GO" id="GO:0007596">
    <property type="term" value="P:blood coagulation"/>
    <property type="evidence" value="ECO:0000304"/>
    <property type="project" value="Reactome"/>
</dbReference>
<dbReference type="GO" id="GO:0016042">
    <property type="term" value="P:lipid catabolic process"/>
    <property type="evidence" value="ECO:0007669"/>
    <property type="project" value="UniProtKB-KW"/>
</dbReference>
<dbReference type="GO" id="GO:0006629">
    <property type="term" value="P:lipid metabolic process"/>
    <property type="evidence" value="ECO:0000304"/>
    <property type="project" value="ProtInc"/>
</dbReference>
<dbReference type="FunFam" id="3.40.50.1820:FF:000062">
    <property type="entry name" value="Platelet-activating factor acetylhydrolase"/>
    <property type="match status" value="1"/>
</dbReference>
<dbReference type="Gene3D" id="3.40.50.1820">
    <property type="entry name" value="alpha/beta hydrolase"/>
    <property type="match status" value="1"/>
</dbReference>
<dbReference type="InterPro" id="IPR029058">
    <property type="entry name" value="AB_hydrolase_fold"/>
</dbReference>
<dbReference type="InterPro" id="IPR016715">
    <property type="entry name" value="PAF_acetylhydro_eukaryote"/>
</dbReference>
<dbReference type="PANTHER" id="PTHR10272">
    <property type="entry name" value="PLATELET-ACTIVATING FACTOR ACETYLHYDROLASE"/>
    <property type="match status" value="1"/>
</dbReference>
<dbReference type="PANTHER" id="PTHR10272:SF6">
    <property type="entry name" value="PLATELET-ACTIVATING FACTOR ACETYLHYDROLASE 2, CYTOPLASMIC"/>
    <property type="match status" value="1"/>
</dbReference>
<dbReference type="Pfam" id="PF03403">
    <property type="entry name" value="PAF-AH_p_II"/>
    <property type="match status" value="1"/>
</dbReference>
<dbReference type="PIRSF" id="PIRSF018169">
    <property type="entry name" value="PAF_acetylhydrolase"/>
    <property type="match status" value="1"/>
</dbReference>
<dbReference type="SUPFAM" id="SSF53474">
    <property type="entry name" value="alpha/beta-Hydrolases"/>
    <property type="match status" value="1"/>
</dbReference>
<dbReference type="PROSITE" id="PS00120">
    <property type="entry name" value="LIPASE_SER"/>
    <property type="match status" value="1"/>
</dbReference>
<gene>
    <name evidence="10" type="primary">PAFAH2</name>
</gene>
<keyword id="KW-0963">Cytoplasm</keyword>
<keyword id="KW-0256">Endoplasmic reticulum</keyword>
<keyword id="KW-0378">Hydrolase</keyword>
<keyword id="KW-0442">Lipid degradation</keyword>
<keyword id="KW-0443">Lipid metabolism</keyword>
<keyword id="KW-0449">Lipoprotein</keyword>
<keyword id="KW-0472">Membrane</keyword>
<keyword id="KW-0519">Myristate</keyword>
<keyword id="KW-1267">Proteomics identification</keyword>
<keyword id="KW-1185">Reference proteome</keyword>
<keyword id="KW-0808">Transferase</keyword>
<sequence>MGVNQSVGFPPVTGPHLVGCGDVMEGQNLQGSFFRLFYPCQKAEETMEQPLWIPRYEYCTGLAEYLQFNKRCGGLLFNLAVGSCRLPVSWNGPFKTKDSGYPLIIFSHGLGAFRTLYSAFCMELASRGFVVAVPEHRDRSAATTYFCKQAPEENQPTNESLQEEWIPFRRVEEGEKEFHVRNPQVHQRVSECLRVLKILQEVTAGQTVFNILPGGLDLMTLKGNIDMSRVAVMGHSFGGATAILALAKETQFRCAVALDAWMFPLERDFYPKARGPVFFINTEKFQTMESVNLMKKICAQHEQSRIITVLGSVHRSQTDFAFVTGNLIGKFFSTETRGSLDPYEGQEVMVRAMLAFLQKHLDLKEDYNQWNNLIEGIGPSLTPGAPHHLSSL</sequence>
<proteinExistence type="evidence at protein level"/>
<protein>
    <recommendedName>
        <fullName evidence="6">Platelet-activating factor acetylhydrolase 2, cytoplasmic</fullName>
        <ecNumber evidence="5">3.1.1.47</ecNumber>
    </recommendedName>
    <alternativeName>
        <fullName evidence="2">PAF:lysophospholipid transacetylase</fullName>
    </alternativeName>
    <alternativeName>
        <fullName evidence="2">PAF:sphingosine transacetylase</fullName>
    </alternativeName>
    <alternativeName>
        <fullName evidence="2">Platelet-activating factor acetyltransferase PAFAH2</fullName>
        <ecNumber evidence="2">2.3.1.149</ecNumber>
    </alternativeName>
    <alternativeName>
        <fullName evidence="7">Serine-dependent phospholipase A2</fullName>
        <shortName evidence="8">SD-PLA2</shortName>
        <shortName evidence="7">hSD-PLA2</shortName>
    </alternativeName>
</protein>
<feature type="initiator methionine" description="Removed">
    <location>
        <position position="1"/>
    </location>
</feature>
<feature type="chain" id="PRO_0000090383" description="Platelet-activating factor acetylhydrolase 2, cytoplasmic">
    <location>
        <begin position="2"/>
        <end position="392"/>
    </location>
</feature>
<feature type="active site" description="Nucleophile" evidence="1">
    <location>
        <position position="236"/>
    </location>
</feature>
<feature type="active site" description="Charge relay system" evidence="3">
    <location>
        <position position="259"/>
    </location>
</feature>
<feature type="active site" description="Charge relay system" evidence="3">
    <location>
        <position position="314"/>
    </location>
</feature>
<feature type="lipid moiety-binding region" description="N-myristoyl glycine" evidence="1">
    <location>
        <position position="2"/>
    </location>
</feature>
<feature type="sequence conflict" description="In Ref. 2; AAC39707." evidence="8" ref="2">
    <original>L</original>
    <variation>F</variation>
    <location>
        <position position="212"/>
    </location>
</feature>
<reference key="1">
    <citation type="journal article" date="1996" name="J. Biol. Chem.">
        <title>cDNA cloning and expression of intracellular platelet-activating factor (PAF) acetylhydrolase II. Its homology with plasma PAF acetylhydrolase.</title>
        <authorList>
            <person name="Hattori K."/>
            <person name="Adachi H."/>
            <person name="Matsuzawa A."/>
            <person name="Yamamoto K."/>
            <person name="Tsujimoto M."/>
            <person name="Aoki J."/>
            <person name="Hattori M."/>
            <person name="Arai H."/>
            <person name="Inoue K."/>
        </authorList>
    </citation>
    <scope>NUCLEOTIDE SEQUENCE [MRNA]</scope>
    <scope>TISSUE SPECIFICITY</scope>
    <source>
        <tissue>Brain</tissue>
    </source>
</reference>
<reference key="2">
    <citation type="journal article" date="1998" name="Biochem. J.">
        <title>Expression, purification and characterization of a human serine-dependent phospholipase A2 with high specificity for oxidized phospholipids and platelet activating factor.</title>
        <authorList>
            <person name="Rice S.Q.J."/>
            <person name="Southan C."/>
            <person name="Boyd H.F."/>
            <person name="Terrett J.A."/>
            <person name="Macphee C.H."/>
            <person name="Moores K."/>
            <person name="Gloger I.S."/>
            <person name="Tew D.G."/>
        </authorList>
    </citation>
    <scope>NUCLEOTIDE SEQUENCE [MRNA]</scope>
    <scope>FUNCTION</scope>
    <scope>CATALYTIC ACTIVITY</scope>
    <scope>ACTIVITY REGULATION</scope>
    <scope>BIOPHYSICOCHEMICAL PROPERTIES</scope>
    <scope>SUBUNIT</scope>
    <scope>SUBCELLULAR LOCATION</scope>
    <scope>TISSUE SPECIFICITY</scope>
    <source>
        <tissue>Prostate</tissue>
    </source>
</reference>
<reference key="3">
    <citation type="journal article" date="2006" name="Nature">
        <title>The DNA sequence and biological annotation of human chromosome 1.</title>
        <authorList>
            <person name="Gregory S.G."/>
            <person name="Barlow K.F."/>
            <person name="McLay K.E."/>
            <person name="Kaul R."/>
            <person name="Swarbreck D."/>
            <person name="Dunham A."/>
            <person name="Scott C.E."/>
            <person name="Howe K.L."/>
            <person name="Woodfine K."/>
            <person name="Spencer C.C.A."/>
            <person name="Jones M.C."/>
            <person name="Gillson C."/>
            <person name="Searle S."/>
            <person name="Zhou Y."/>
            <person name="Kokocinski F."/>
            <person name="McDonald L."/>
            <person name="Evans R."/>
            <person name="Phillips K."/>
            <person name="Atkinson A."/>
            <person name="Cooper R."/>
            <person name="Jones C."/>
            <person name="Hall R.E."/>
            <person name="Andrews T.D."/>
            <person name="Lloyd C."/>
            <person name="Ainscough R."/>
            <person name="Almeida J.P."/>
            <person name="Ambrose K.D."/>
            <person name="Anderson F."/>
            <person name="Andrew R.W."/>
            <person name="Ashwell R.I.S."/>
            <person name="Aubin K."/>
            <person name="Babbage A.K."/>
            <person name="Bagguley C.L."/>
            <person name="Bailey J."/>
            <person name="Beasley H."/>
            <person name="Bethel G."/>
            <person name="Bird C.P."/>
            <person name="Bray-Allen S."/>
            <person name="Brown J.Y."/>
            <person name="Brown A.J."/>
            <person name="Buckley D."/>
            <person name="Burton J."/>
            <person name="Bye J."/>
            <person name="Carder C."/>
            <person name="Chapman J.C."/>
            <person name="Clark S.Y."/>
            <person name="Clarke G."/>
            <person name="Clee C."/>
            <person name="Cobley V."/>
            <person name="Collier R.E."/>
            <person name="Corby N."/>
            <person name="Coville G.J."/>
            <person name="Davies J."/>
            <person name="Deadman R."/>
            <person name="Dunn M."/>
            <person name="Earthrowl M."/>
            <person name="Ellington A.G."/>
            <person name="Errington H."/>
            <person name="Frankish A."/>
            <person name="Frankland J."/>
            <person name="French L."/>
            <person name="Garner P."/>
            <person name="Garnett J."/>
            <person name="Gay L."/>
            <person name="Ghori M.R.J."/>
            <person name="Gibson R."/>
            <person name="Gilby L.M."/>
            <person name="Gillett W."/>
            <person name="Glithero R.J."/>
            <person name="Grafham D.V."/>
            <person name="Griffiths C."/>
            <person name="Griffiths-Jones S."/>
            <person name="Grocock R."/>
            <person name="Hammond S."/>
            <person name="Harrison E.S.I."/>
            <person name="Hart E."/>
            <person name="Haugen E."/>
            <person name="Heath P.D."/>
            <person name="Holmes S."/>
            <person name="Holt K."/>
            <person name="Howden P.J."/>
            <person name="Hunt A.R."/>
            <person name="Hunt S.E."/>
            <person name="Hunter G."/>
            <person name="Isherwood J."/>
            <person name="James R."/>
            <person name="Johnson C."/>
            <person name="Johnson D."/>
            <person name="Joy A."/>
            <person name="Kay M."/>
            <person name="Kershaw J.K."/>
            <person name="Kibukawa M."/>
            <person name="Kimberley A.M."/>
            <person name="King A."/>
            <person name="Knights A.J."/>
            <person name="Lad H."/>
            <person name="Laird G."/>
            <person name="Lawlor S."/>
            <person name="Leongamornlert D.A."/>
            <person name="Lloyd D.M."/>
            <person name="Loveland J."/>
            <person name="Lovell J."/>
            <person name="Lush M.J."/>
            <person name="Lyne R."/>
            <person name="Martin S."/>
            <person name="Mashreghi-Mohammadi M."/>
            <person name="Matthews L."/>
            <person name="Matthews N.S.W."/>
            <person name="McLaren S."/>
            <person name="Milne S."/>
            <person name="Mistry S."/>
            <person name="Moore M.J.F."/>
            <person name="Nickerson T."/>
            <person name="O'Dell C.N."/>
            <person name="Oliver K."/>
            <person name="Palmeiri A."/>
            <person name="Palmer S.A."/>
            <person name="Parker A."/>
            <person name="Patel D."/>
            <person name="Pearce A.V."/>
            <person name="Peck A.I."/>
            <person name="Pelan S."/>
            <person name="Phelps K."/>
            <person name="Phillimore B.J."/>
            <person name="Plumb R."/>
            <person name="Rajan J."/>
            <person name="Raymond C."/>
            <person name="Rouse G."/>
            <person name="Saenphimmachak C."/>
            <person name="Sehra H.K."/>
            <person name="Sheridan E."/>
            <person name="Shownkeen R."/>
            <person name="Sims S."/>
            <person name="Skuce C.D."/>
            <person name="Smith M."/>
            <person name="Steward C."/>
            <person name="Subramanian S."/>
            <person name="Sycamore N."/>
            <person name="Tracey A."/>
            <person name="Tromans A."/>
            <person name="Van Helmond Z."/>
            <person name="Wall M."/>
            <person name="Wallis J.M."/>
            <person name="White S."/>
            <person name="Whitehead S.L."/>
            <person name="Wilkinson J.E."/>
            <person name="Willey D.L."/>
            <person name="Williams H."/>
            <person name="Wilming L."/>
            <person name="Wray P.W."/>
            <person name="Wu Z."/>
            <person name="Coulson A."/>
            <person name="Vaudin M."/>
            <person name="Sulston J.E."/>
            <person name="Durbin R.M."/>
            <person name="Hubbard T."/>
            <person name="Wooster R."/>
            <person name="Dunham I."/>
            <person name="Carter N.P."/>
            <person name="McVean G."/>
            <person name="Ross M.T."/>
            <person name="Harrow J."/>
            <person name="Olson M.V."/>
            <person name="Beck S."/>
            <person name="Rogers J."/>
            <person name="Bentley D.R."/>
        </authorList>
    </citation>
    <scope>NUCLEOTIDE SEQUENCE [LARGE SCALE GENOMIC DNA]</scope>
</reference>
<reference key="4">
    <citation type="submission" date="2005-09" db="EMBL/GenBank/DDBJ databases">
        <authorList>
            <person name="Mural R.J."/>
            <person name="Istrail S."/>
            <person name="Sutton G.G."/>
            <person name="Florea L."/>
            <person name="Halpern A.L."/>
            <person name="Mobarry C.M."/>
            <person name="Lippert R."/>
            <person name="Walenz B."/>
            <person name="Shatkay H."/>
            <person name="Dew I."/>
            <person name="Miller J.R."/>
            <person name="Flanigan M.J."/>
            <person name="Edwards N.J."/>
            <person name="Bolanos R."/>
            <person name="Fasulo D."/>
            <person name="Halldorsson B.V."/>
            <person name="Hannenhalli S."/>
            <person name="Turner R."/>
            <person name="Yooseph S."/>
            <person name="Lu F."/>
            <person name="Nusskern D.R."/>
            <person name="Shue B.C."/>
            <person name="Zheng X.H."/>
            <person name="Zhong F."/>
            <person name="Delcher A.L."/>
            <person name="Huson D.H."/>
            <person name="Kravitz S.A."/>
            <person name="Mouchard L."/>
            <person name="Reinert K."/>
            <person name="Remington K.A."/>
            <person name="Clark A.G."/>
            <person name="Waterman M.S."/>
            <person name="Eichler E.E."/>
            <person name="Adams M.D."/>
            <person name="Hunkapiller M.W."/>
            <person name="Myers E.W."/>
            <person name="Venter J.C."/>
        </authorList>
    </citation>
    <scope>NUCLEOTIDE SEQUENCE [LARGE SCALE GENOMIC DNA]</scope>
</reference>
<reference key="5">
    <citation type="journal article" date="2004" name="Genome Res.">
        <title>The status, quality, and expansion of the NIH full-length cDNA project: the Mammalian Gene Collection (MGC).</title>
        <authorList>
            <consortium name="The MGC Project Team"/>
        </authorList>
    </citation>
    <scope>NUCLEOTIDE SEQUENCE [LARGE SCALE MRNA]</scope>
    <source>
        <tissue>Eye</tissue>
    </source>
</reference>
<reference key="6">
    <citation type="journal article" date="1997" name="J. Biol. Chem.">
        <title>Platelet-activating factor acetylhydrolases.</title>
        <authorList>
            <person name="Stafforini D.M."/>
            <person name="McIntyre T.M."/>
            <person name="Zimmerman G.A."/>
            <person name="Prescott S.M."/>
        </authorList>
    </citation>
    <scope>REVIEW</scope>
</reference>
<name>PAFA2_HUMAN</name>